<organism>
    <name type="scientific">Rhizobium etli (strain ATCC 51251 / DSM 11541 / JCM 21823 / NBRC 15573 / CFN 42)</name>
    <dbReference type="NCBI Taxonomy" id="347834"/>
    <lineage>
        <taxon>Bacteria</taxon>
        <taxon>Pseudomonadati</taxon>
        <taxon>Pseudomonadota</taxon>
        <taxon>Alphaproteobacteria</taxon>
        <taxon>Hyphomicrobiales</taxon>
        <taxon>Rhizobiaceae</taxon>
        <taxon>Rhizobium/Agrobacterium group</taxon>
        <taxon>Rhizobium</taxon>
    </lineage>
</organism>
<comment type="function">
    <text evidence="1 2">The beta subunit is responsible for the synthesis of L-tryptophan from indole and L-serine. Essential for production of nod factors and establishment of symbiosis.</text>
</comment>
<comment type="catalytic activity">
    <reaction evidence="1">
        <text>(1S,2R)-1-C-(indol-3-yl)glycerol 3-phosphate + L-serine = D-glyceraldehyde 3-phosphate + L-tryptophan + H2O</text>
        <dbReference type="Rhea" id="RHEA:10532"/>
        <dbReference type="ChEBI" id="CHEBI:15377"/>
        <dbReference type="ChEBI" id="CHEBI:33384"/>
        <dbReference type="ChEBI" id="CHEBI:57912"/>
        <dbReference type="ChEBI" id="CHEBI:58866"/>
        <dbReference type="ChEBI" id="CHEBI:59776"/>
        <dbReference type="EC" id="4.2.1.20"/>
    </reaction>
</comment>
<comment type="cofactor">
    <cofactor evidence="1">
        <name>pyridoxal 5'-phosphate</name>
        <dbReference type="ChEBI" id="CHEBI:597326"/>
    </cofactor>
</comment>
<comment type="pathway">
    <text evidence="1">Amino-acid biosynthesis; L-tryptophan biosynthesis; L-tryptophan from chorismate: step 5/5.</text>
</comment>
<comment type="subunit">
    <text evidence="1">Tetramer of two alpha and two beta chains.</text>
</comment>
<comment type="similarity">
    <text evidence="1">Belongs to the TrpB family.</text>
</comment>
<sequence>MNETPKPNSFRSGPDEDGRFGIYGGRFVAETLMPLILDLQDEWNKAKSDPAFQAELKHLGAHYIGRPSPLYFAERLTAELGGAKIYFKREELNHTGSHKINNCIGQILLAKRMGKTRIIAETGAGQHGVASATVAARFGLPCVVYMGATDVERQAPNVFRMKLLGAEVKPVTAGSGTLKDAMNEALRDWVTNVEDTYYLIGTAAGPHPYPEMVRDFQSVIGAEAKEQMLAAEGRLPDLVVAAVGGGSNAIGIFHPFLDDSSVKIVGVEAGGKGLQGDEHCASITAGSPGVLHGNRTYLLQDGDGQIKEGHSISAGLDYPGIGPEHSWLSDIGRVDYVPIMDHEALEAFQTLTRLEGIIPALEAAHAIAEVIKRAPKMGKDEIILMNLSGRGDKDIFTVGKILGMGL</sequence>
<gene>
    <name evidence="1" type="primary">trpB</name>
    <name type="ordered locus">RHE_CH00021</name>
</gene>
<dbReference type="EC" id="4.2.1.20" evidence="1"/>
<dbReference type="EMBL" id="AJ245564">
    <property type="protein sequence ID" value="CAB55324.2"/>
    <property type="molecule type" value="Genomic_DNA"/>
</dbReference>
<dbReference type="EMBL" id="CP000133">
    <property type="protein sequence ID" value="ABC88854.1"/>
    <property type="molecule type" value="Genomic_DNA"/>
</dbReference>
<dbReference type="RefSeq" id="WP_011423426.1">
    <property type="nucleotide sequence ID" value="NC_007761.1"/>
</dbReference>
<dbReference type="SMR" id="Q2KE82"/>
<dbReference type="KEGG" id="ret:RHE_CH00021"/>
<dbReference type="eggNOG" id="COG0133">
    <property type="taxonomic scope" value="Bacteria"/>
</dbReference>
<dbReference type="HOGENOM" id="CLU_016734_3_1_5"/>
<dbReference type="OrthoDB" id="9766131at2"/>
<dbReference type="UniPathway" id="UPA00035">
    <property type="reaction ID" value="UER00044"/>
</dbReference>
<dbReference type="Proteomes" id="UP000001936">
    <property type="component" value="Chromosome"/>
</dbReference>
<dbReference type="GO" id="GO:0005737">
    <property type="term" value="C:cytoplasm"/>
    <property type="evidence" value="ECO:0007669"/>
    <property type="project" value="TreeGrafter"/>
</dbReference>
<dbReference type="GO" id="GO:0004834">
    <property type="term" value="F:tryptophan synthase activity"/>
    <property type="evidence" value="ECO:0007669"/>
    <property type="project" value="UniProtKB-UniRule"/>
</dbReference>
<dbReference type="CDD" id="cd06446">
    <property type="entry name" value="Trp-synth_B"/>
    <property type="match status" value="1"/>
</dbReference>
<dbReference type="FunFam" id="3.40.50.1100:FF:000001">
    <property type="entry name" value="Tryptophan synthase beta chain"/>
    <property type="match status" value="1"/>
</dbReference>
<dbReference type="FunFam" id="3.40.50.1100:FF:000004">
    <property type="entry name" value="Tryptophan synthase beta chain"/>
    <property type="match status" value="1"/>
</dbReference>
<dbReference type="Gene3D" id="3.40.50.1100">
    <property type="match status" value="2"/>
</dbReference>
<dbReference type="HAMAP" id="MF_00133">
    <property type="entry name" value="Trp_synth_beta"/>
    <property type="match status" value="1"/>
</dbReference>
<dbReference type="InterPro" id="IPR006653">
    <property type="entry name" value="Trp_synth_b_CS"/>
</dbReference>
<dbReference type="InterPro" id="IPR006654">
    <property type="entry name" value="Trp_synth_beta"/>
</dbReference>
<dbReference type="InterPro" id="IPR023026">
    <property type="entry name" value="Trp_synth_beta/beta-like"/>
</dbReference>
<dbReference type="InterPro" id="IPR001926">
    <property type="entry name" value="TrpB-like_PALP"/>
</dbReference>
<dbReference type="InterPro" id="IPR036052">
    <property type="entry name" value="TrpB-like_PALP_sf"/>
</dbReference>
<dbReference type="NCBIfam" id="TIGR00263">
    <property type="entry name" value="trpB"/>
    <property type="match status" value="1"/>
</dbReference>
<dbReference type="PANTHER" id="PTHR48077:SF3">
    <property type="entry name" value="TRYPTOPHAN SYNTHASE"/>
    <property type="match status" value="1"/>
</dbReference>
<dbReference type="PANTHER" id="PTHR48077">
    <property type="entry name" value="TRYPTOPHAN SYNTHASE-RELATED"/>
    <property type="match status" value="1"/>
</dbReference>
<dbReference type="Pfam" id="PF00291">
    <property type="entry name" value="PALP"/>
    <property type="match status" value="1"/>
</dbReference>
<dbReference type="PIRSF" id="PIRSF001413">
    <property type="entry name" value="Trp_syn_beta"/>
    <property type="match status" value="1"/>
</dbReference>
<dbReference type="SUPFAM" id="SSF53686">
    <property type="entry name" value="Tryptophan synthase beta subunit-like PLP-dependent enzymes"/>
    <property type="match status" value="1"/>
</dbReference>
<dbReference type="PROSITE" id="PS00168">
    <property type="entry name" value="TRP_SYNTHASE_BETA"/>
    <property type="match status" value="1"/>
</dbReference>
<keyword id="KW-0028">Amino-acid biosynthesis</keyword>
<keyword id="KW-0057">Aromatic amino acid biosynthesis</keyword>
<keyword id="KW-0456">Lyase</keyword>
<keyword id="KW-0663">Pyridoxal phosphate</keyword>
<keyword id="KW-1185">Reference proteome</keyword>
<keyword id="KW-0822">Tryptophan biosynthesis</keyword>
<accession>Q2KE82</accession>
<accession>P56929</accession>
<evidence type="ECO:0000255" key="1">
    <source>
        <dbReference type="HAMAP-Rule" id="MF_00133"/>
    </source>
</evidence>
<evidence type="ECO:0000269" key="2">
    <source>
    </source>
</evidence>
<evidence type="ECO:0000305" key="3"/>
<reference key="1">
    <citation type="journal article" date="1999" name="Mol. Plant Microbe Interact.">
        <title>The Rhizobium etli trpB gene is essential for an effective symbiotic interaction with Phaseolus vulgaris.</title>
        <authorList>
            <person name="Tate R."/>
            <person name="Riccio A."/>
            <person name="Caputo E."/>
            <person name="Cermola M."/>
            <person name="Favre R."/>
            <person name="Patriarca E.J."/>
        </authorList>
    </citation>
    <scope>NUCLEOTIDE SEQUENCE [GENOMIC DNA]</scope>
    <scope>FUNCTION IN SYMBIOSIS</scope>
    <source>
        <strain>CE3</strain>
    </source>
</reference>
<reference key="2">
    <citation type="submission" date="2010-06" db="EMBL/GenBank/DDBJ databases">
        <authorList>
            <person name="Patriarca E.J."/>
        </authorList>
    </citation>
    <scope>SEQUENCE REVISION TO 92; 143; 171; 219; 262 AND 337</scope>
</reference>
<reference key="3">
    <citation type="journal article" date="2006" name="Proc. Natl. Acad. Sci. U.S.A.">
        <title>The partitioned Rhizobium etli genome: genetic and metabolic redundancy in seven interacting replicons.</title>
        <authorList>
            <person name="Gonzalez V."/>
            <person name="Santamaria R.I."/>
            <person name="Bustos P."/>
            <person name="Hernandez-Gonzalez I."/>
            <person name="Medrano-Soto A."/>
            <person name="Moreno-Hagelsieb G."/>
            <person name="Janga S.C."/>
            <person name="Ramirez M.A."/>
            <person name="Jimenez-Jacinto V."/>
            <person name="Collado-Vides J."/>
            <person name="Davila G."/>
        </authorList>
    </citation>
    <scope>NUCLEOTIDE SEQUENCE [LARGE SCALE GENOMIC DNA]</scope>
    <source>
        <strain>ATCC 51251 / DSM 11541 / JCM 21823 / NBRC 15573 / CFN 42</strain>
    </source>
</reference>
<feature type="chain" id="PRO_1000018380" description="Tryptophan synthase beta chain">
    <location>
        <begin position="1"/>
        <end position="406"/>
    </location>
</feature>
<feature type="modified residue" description="N6-(pyridoxal phosphate)lysine" evidence="1">
    <location>
        <position position="99"/>
    </location>
</feature>
<feature type="sequence conflict" description="In Ref. 1; CAB55324." evidence="3" ref="1">
    <original>KH</original>
    <variation>ND</variation>
    <location>
        <begin position="57"/>
        <end position="58"/>
    </location>
</feature>
<feature type="sequence conflict" description="In Ref. 1; CAB55324." evidence="3" ref="1">
    <original>AH</original>
    <variation>RD</variation>
    <location>
        <begin position="61"/>
        <end position="62"/>
    </location>
</feature>
<feature type="sequence conflict" description="In Ref. 1; CAB55324." evidence="3" ref="1">
    <original>EL</original>
    <variation>DV</variation>
    <location>
        <begin position="91"/>
        <end position="92"/>
    </location>
</feature>
<feature type="sequence conflict" description="In Ref. 1; CAB55324." evidence="3" ref="1">
    <original>T</original>
    <variation>A</variation>
    <location>
        <position position="133"/>
    </location>
</feature>
<proteinExistence type="evidence at protein level"/>
<protein>
    <recommendedName>
        <fullName evidence="1">Tryptophan synthase beta chain</fullName>
        <ecNumber evidence="1">4.2.1.20</ecNumber>
    </recommendedName>
</protein>
<name>TRPB_RHIEC</name>